<name>DHP1_CORGT</name>
<geneLocation type="plasmid">
    <name>pCG4</name>
</geneLocation>
<proteinExistence type="inferred from homology"/>
<reference key="1">
    <citation type="journal article" date="1998" name="FEMS Microbiol. Lett.">
        <title>An integron of class 1 is present on the plasmid pCG4 from Gram-positive bacterium Corynebacterium glutamicum.</title>
        <authorList>
            <person name="Nesvera J."/>
            <person name="Hochmannova J."/>
            <person name="Patek M."/>
        </authorList>
    </citation>
    <scope>NUCLEOTIDE SEQUENCE [GENOMIC DNA]</scope>
    <source>
        <strain>ATCC 31830 / T250</strain>
        <plasmid>pCG4</plasmid>
    </source>
</reference>
<feature type="chain" id="PRO_0000168200" description="Dihydropteroate synthase type-1">
    <location>
        <begin position="1"/>
        <end position="279"/>
    </location>
</feature>
<feature type="domain" description="Pterin-binding" evidence="4">
    <location>
        <begin position="1"/>
        <end position="258"/>
    </location>
</feature>
<feature type="binding site" evidence="3">
    <location>
        <position position="9"/>
    </location>
    <ligand>
        <name>Mg(2+)</name>
        <dbReference type="ChEBI" id="CHEBI:18420"/>
    </ligand>
</feature>
<feature type="binding site" evidence="2">
    <location>
        <position position="82"/>
    </location>
    <ligand>
        <name>(7,8-dihydropterin-6-yl)methyl diphosphate</name>
        <dbReference type="ChEBI" id="CHEBI:72950"/>
    </ligand>
</feature>
<feature type="binding site" evidence="2">
    <location>
        <position position="101"/>
    </location>
    <ligand>
        <name>(7,8-dihydropterin-6-yl)methyl diphosphate</name>
        <dbReference type="ChEBI" id="CHEBI:72950"/>
    </ligand>
</feature>
<feature type="binding site" evidence="2">
    <location>
        <position position="173"/>
    </location>
    <ligand>
        <name>(7,8-dihydropterin-6-yl)methyl diphosphate</name>
        <dbReference type="ChEBI" id="CHEBI:72950"/>
    </ligand>
</feature>
<feature type="binding site" evidence="2">
    <location>
        <position position="212"/>
    </location>
    <ligand>
        <name>(7,8-dihydropterin-6-yl)methyl diphosphate</name>
        <dbReference type="ChEBI" id="CHEBI:72950"/>
    </ligand>
</feature>
<feature type="binding site" evidence="2">
    <location>
        <begin position="246"/>
        <end position="248"/>
    </location>
    <ligand>
        <name>(7,8-dihydropterin-6-yl)methyl diphosphate</name>
        <dbReference type="ChEBI" id="CHEBI:72950"/>
    </ligand>
</feature>
<gene>
    <name type="primary">sulI</name>
</gene>
<dbReference type="EC" id="2.5.1.15"/>
<dbReference type="EMBL" id="Y14748">
    <property type="protein sequence ID" value="CAA75045.1"/>
    <property type="molecule type" value="Genomic_DNA"/>
</dbReference>
<dbReference type="RefSeq" id="NP_478074.1">
    <property type="nucleotide sequence ID" value="NC_003227.1"/>
</dbReference>
<dbReference type="RefSeq" id="NP_862308.1">
    <property type="nucleotide sequence ID" value="NC_004945.1"/>
</dbReference>
<dbReference type="SMR" id="P0C004"/>
<dbReference type="UniPathway" id="UPA00077">
    <property type="reaction ID" value="UER00156"/>
</dbReference>
<dbReference type="GO" id="GO:0005829">
    <property type="term" value="C:cytosol"/>
    <property type="evidence" value="ECO:0007669"/>
    <property type="project" value="TreeGrafter"/>
</dbReference>
<dbReference type="GO" id="GO:0004156">
    <property type="term" value="F:dihydropteroate synthase activity"/>
    <property type="evidence" value="ECO:0007669"/>
    <property type="project" value="UniProtKB-EC"/>
</dbReference>
<dbReference type="GO" id="GO:0046872">
    <property type="term" value="F:metal ion binding"/>
    <property type="evidence" value="ECO:0007669"/>
    <property type="project" value="UniProtKB-KW"/>
</dbReference>
<dbReference type="GO" id="GO:0046656">
    <property type="term" value="P:folic acid biosynthetic process"/>
    <property type="evidence" value="ECO:0007669"/>
    <property type="project" value="UniProtKB-KW"/>
</dbReference>
<dbReference type="GO" id="GO:0046654">
    <property type="term" value="P:tetrahydrofolate biosynthetic process"/>
    <property type="evidence" value="ECO:0007669"/>
    <property type="project" value="UniProtKB-UniPathway"/>
</dbReference>
<dbReference type="CDD" id="cd00739">
    <property type="entry name" value="DHPS"/>
    <property type="match status" value="1"/>
</dbReference>
<dbReference type="Gene3D" id="3.20.20.20">
    <property type="entry name" value="Dihydropteroate synthase-like"/>
    <property type="match status" value="1"/>
</dbReference>
<dbReference type="InterPro" id="IPR045031">
    <property type="entry name" value="DHP_synth-like"/>
</dbReference>
<dbReference type="InterPro" id="IPR006390">
    <property type="entry name" value="DHP_synth_dom"/>
</dbReference>
<dbReference type="InterPro" id="IPR011005">
    <property type="entry name" value="Dihydropteroate_synth-like_sf"/>
</dbReference>
<dbReference type="InterPro" id="IPR000489">
    <property type="entry name" value="Pterin-binding_dom"/>
</dbReference>
<dbReference type="NCBIfam" id="TIGR01496">
    <property type="entry name" value="DHPS"/>
    <property type="match status" value="1"/>
</dbReference>
<dbReference type="NCBIfam" id="NF000294">
    <property type="entry name" value="Sul1"/>
    <property type="match status" value="1"/>
</dbReference>
<dbReference type="PANTHER" id="PTHR20941">
    <property type="entry name" value="FOLATE SYNTHESIS PROTEINS"/>
    <property type="match status" value="1"/>
</dbReference>
<dbReference type="PANTHER" id="PTHR20941:SF1">
    <property type="entry name" value="FOLIC ACID SYNTHESIS PROTEIN FOL1"/>
    <property type="match status" value="1"/>
</dbReference>
<dbReference type="Pfam" id="PF00809">
    <property type="entry name" value="Pterin_bind"/>
    <property type="match status" value="1"/>
</dbReference>
<dbReference type="SUPFAM" id="SSF51717">
    <property type="entry name" value="Dihydropteroate synthetase-like"/>
    <property type="match status" value="1"/>
</dbReference>
<dbReference type="PROSITE" id="PS00792">
    <property type="entry name" value="DHPS_1"/>
    <property type="match status" value="1"/>
</dbReference>
<dbReference type="PROSITE" id="PS00793">
    <property type="entry name" value="DHPS_2"/>
    <property type="match status" value="1"/>
</dbReference>
<dbReference type="PROSITE" id="PS50972">
    <property type="entry name" value="PTERIN_BINDING"/>
    <property type="match status" value="1"/>
</dbReference>
<sequence length="279" mass="30126">MVTVFGILNLTEDSFFDESRRLDPAGAVTAAIEMLRVGSDVVDVGPAASHPDARPVSPADEIRRIAPLLDALSDQMHRVSIDSFQPETQRYALKRGVGYLNDIQGFPDPALYPDIAEADCRLVVMHSAQRDGIATRTGHLRPEDALDEIVRFFEARVSALRRSGVAADRLILDPGMGFFLSPAPETSLHVLSNLQKLKSALGLPLLVSVSRKSFLGATVGLPVKDLGPASLAAELHAIGNGADYVRTHAPGDLRSAITFSETLAKFRSRDARDRGLDHA</sequence>
<keyword id="KW-0289">Folate biosynthesis</keyword>
<keyword id="KW-0460">Magnesium</keyword>
<keyword id="KW-0479">Metal-binding</keyword>
<keyword id="KW-0614">Plasmid</keyword>
<keyword id="KW-0808">Transferase</keyword>
<keyword id="KW-0814">Transposable element</keyword>
<comment type="function">
    <text evidence="2">Catalyzes the condensation of para-aminobenzoate (pABA) with 6-hydroxymethyl-7,8-dihydropterin diphosphate (DHPt-PP) to form 7,8-dihydropteroate (H2Pte), the immediate precursor of folate derivatives.</text>
</comment>
<comment type="catalytic activity">
    <reaction evidence="2">
        <text>(7,8-dihydropterin-6-yl)methyl diphosphate + 4-aminobenzoate = 7,8-dihydropteroate + diphosphate</text>
        <dbReference type="Rhea" id="RHEA:19949"/>
        <dbReference type="ChEBI" id="CHEBI:17836"/>
        <dbReference type="ChEBI" id="CHEBI:17839"/>
        <dbReference type="ChEBI" id="CHEBI:33019"/>
        <dbReference type="ChEBI" id="CHEBI:72950"/>
        <dbReference type="EC" id="2.5.1.15"/>
    </reaction>
</comment>
<comment type="cofactor">
    <cofactor evidence="2">
        <name>Mg(2+)</name>
        <dbReference type="ChEBI" id="CHEBI:18420"/>
    </cofactor>
</comment>
<comment type="pathway">
    <text>Cofactor biosynthesis; tetrahydrofolate biosynthesis; 7,8-dihydrofolate from 2-amino-4-hydroxy-6-hydroxymethyl-7,8-dihydropteridine diphosphate and 4-aminobenzoate: step 1/2.</text>
</comment>
<comment type="subunit">
    <text evidence="1">Homodimer or homotrimer.</text>
</comment>
<comment type="miscellaneous">
    <text>The sulI gene is located on various large self-transmissible resistance plasmids and on transposons related to Tn21.</text>
</comment>
<comment type="similarity">
    <text evidence="5">Belongs to the DHPS family.</text>
</comment>
<accession>P0C004</accession>
<accession>P11744</accession>
<accession>Q93K51</accession>
<organism>
    <name type="scientific">Corynebacterium glutamicum</name>
    <name type="common">Brevibacterium saccharolyticum</name>
    <dbReference type="NCBI Taxonomy" id="1718"/>
    <lineage>
        <taxon>Bacteria</taxon>
        <taxon>Bacillati</taxon>
        <taxon>Actinomycetota</taxon>
        <taxon>Actinomycetes</taxon>
        <taxon>Mycobacteriales</taxon>
        <taxon>Corynebacteriaceae</taxon>
        <taxon>Corynebacterium</taxon>
    </lineage>
</organism>
<evidence type="ECO:0000250" key="1"/>
<evidence type="ECO:0000250" key="2">
    <source>
        <dbReference type="UniProtKB" id="P0AC13"/>
    </source>
</evidence>
<evidence type="ECO:0000250" key="3">
    <source>
        <dbReference type="UniProtKB" id="P9WND1"/>
    </source>
</evidence>
<evidence type="ECO:0000255" key="4">
    <source>
        <dbReference type="PROSITE-ProRule" id="PRU00334"/>
    </source>
</evidence>
<evidence type="ECO:0000305" key="5"/>
<protein>
    <recommendedName>
        <fullName>Dihydropteroate synthase type-1</fullName>
        <ecNumber>2.5.1.15</ecNumber>
    </recommendedName>
    <alternativeName>
        <fullName>Dihydropteroate pyrophosphorylase type I</fullName>
    </alternativeName>
    <alternativeName>
        <fullName>Dihydropteroate synthase type I</fullName>
        <shortName>DHPS</shortName>
    </alternativeName>
</protein>